<keyword id="KW-0010">Activator</keyword>
<keyword id="KW-0238">DNA-binding</keyword>
<keyword id="KW-0539">Nucleus</keyword>
<keyword id="KW-1185">Reference proteome</keyword>
<keyword id="KW-0804">Transcription</keyword>
<keyword id="KW-0805">Transcription regulation</keyword>
<gene>
    <name evidence="7 12" type="primary">aptf-1</name>
    <name evidence="12" type="ORF">K06A1.1</name>
</gene>
<reference evidence="10 11" key="1">
    <citation type="journal article" date="1998" name="Science">
        <title>Genome sequence of the nematode C. elegans: a platform for investigating biology.</title>
        <authorList>
            <consortium name="The C. elegans sequencing consortium"/>
        </authorList>
    </citation>
    <scope>NUCLEOTIDE SEQUENCE [LARGE SCALE GENOMIC DNA]</scope>
    <source>
        <strain evidence="10 11">Bristol N2</strain>
    </source>
</reference>
<reference key="2">
    <citation type="journal article" date="2013" name="Curr. Biol.">
        <title>An AP2 transcription factor is required for a sleep-active neuron to induce sleep-like quiescence in C. elegans.</title>
        <authorList>
            <person name="Turek M."/>
            <person name="Lewandrowski I."/>
            <person name="Bringmann H."/>
        </authorList>
    </citation>
    <scope>FUNCTION</scope>
    <scope>TISSUE SPECIFICITY</scope>
    <scope>DEVELOPMENTAL STAGE</scope>
    <scope>INDUCTION</scope>
    <scope>DISRUPTION PHENOTYPE</scope>
    <scope>PHYLOGENETIC ANALYSIS</scope>
</reference>
<reference key="3">
    <citation type="journal article" date="2016" name="Elife">
        <title>Sleep-active neuron specification and sleep induction require FLP-11 neuropeptides to systemically induce sleep.</title>
        <authorList>
            <person name="Turek M."/>
            <person name="Besseling J."/>
            <person name="Spies J.P."/>
            <person name="Koenig S."/>
            <person name="Bringmann H."/>
        </authorList>
    </citation>
    <scope>FUNCTION</scope>
    <scope>INDUCTION</scope>
    <scope>DISRUPTION PHENOTYPE</scope>
</reference>
<sequence length="365" mass="41328">MFNRKLMECSDDEFVRGSQCDEEDEEEQQRQSSQRPPFYENMRTFAPSHMHISCHYDIPYPPHLIQPPVCGVSTFTYAREFPVSNSQQFFNVTPPQQQQQQGTGGSGEEDYCIPKSEDRDHSSNYSQVATKQDRPFVFFASDCQSPLEIVGEVYCTVPGRTSLLSSTTKYRVTVAEIQRRISPPECLNASLLGGILRKAKSKDGGKTLRDSLKKLGLTLPAGRRKQANVTAWTALVEEEAIHMAKEFALVCEKEFHSREIGIYLTKTSLAIDPDVVKRRTALEMSRKVVGELAELLSCDRTPLTPYFPRNMLPIDPSVQQHLSHFTLMTHGFGNVAMSAVLESVKLMIDESIKYIDRCCSQNVWR</sequence>
<dbReference type="EMBL" id="BX284602">
    <property type="protein sequence ID" value="CCD72609.1"/>
    <property type="molecule type" value="Genomic_DNA"/>
</dbReference>
<dbReference type="PIR" id="T34333">
    <property type="entry name" value="T34333"/>
</dbReference>
<dbReference type="RefSeq" id="NP_495300.2">
    <property type="nucleotide sequence ID" value="NM_062899.4"/>
</dbReference>
<dbReference type="SMR" id="Q09585"/>
<dbReference type="FunCoup" id="Q09585">
    <property type="interactions" value="210"/>
</dbReference>
<dbReference type="STRING" id="6239.K06A1.1.1"/>
<dbReference type="PaxDb" id="6239-K06A1.1"/>
<dbReference type="EnsemblMetazoa" id="K06A1.1.1">
    <property type="protein sequence ID" value="K06A1.1.1"/>
    <property type="gene ID" value="WBGene00019424"/>
</dbReference>
<dbReference type="GeneID" id="187043"/>
<dbReference type="KEGG" id="cel:CELE_K06A1.1"/>
<dbReference type="UCSC" id="K06A1.1">
    <property type="organism name" value="c. elegans"/>
</dbReference>
<dbReference type="AGR" id="WB:WBGene00019424"/>
<dbReference type="CTD" id="187043"/>
<dbReference type="WormBase" id="K06A1.1">
    <property type="protein sequence ID" value="CE35990"/>
    <property type="gene ID" value="WBGene00019424"/>
    <property type="gene designation" value="aptf-1"/>
</dbReference>
<dbReference type="eggNOG" id="KOG3811">
    <property type="taxonomic scope" value="Eukaryota"/>
</dbReference>
<dbReference type="GeneTree" id="ENSGT00950000182848"/>
<dbReference type="HOGENOM" id="CLU_804708_0_0_1"/>
<dbReference type="InParanoid" id="Q09585"/>
<dbReference type="OMA" id="MFNRKLM"/>
<dbReference type="OrthoDB" id="6252992at2759"/>
<dbReference type="PhylomeDB" id="Q09585"/>
<dbReference type="Reactome" id="R-CEL-3232118">
    <property type="pathway name" value="SUMOylation of transcription factors"/>
</dbReference>
<dbReference type="Reactome" id="R-CEL-8866904">
    <property type="pathway name" value="Negative regulation of activity of TFAP2 (AP-2) family transcription factors"/>
</dbReference>
<dbReference type="Reactome" id="R-CEL-8866907">
    <property type="pathway name" value="Activation of the TFAP2 (AP-2) family of transcription factors"/>
</dbReference>
<dbReference type="Reactome" id="R-CEL-9834899">
    <property type="pathway name" value="Specification of the neural plate border"/>
</dbReference>
<dbReference type="PRO" id="PR:Q09585"/>
<dbReference type="Proteomes" id="UP000001940">
    <property type="component" value="Chromosome II"/>
</dbReference>
<dbReference type="Bgee" id="WBGene00019424">
    <property type="expression patterns" value="Expressed in pharyngeal muscle cell (C elegans) and 2 other cell types or tissues"/>
</dbReference>
<dbReference type="GO" id="GO:0005634">
    <property type="term" value="C:nucleus"/>
    <property type="evidence" value="ECO:0000318"/>
    <property type="project" value="GO_Central"/>
</dbReference>
<dbReference type="GO" id="GO:0001228">
    <property type="term" value="F:DNA-binding transcription activator activity, RNA polymerase II-specific"/>
    <property type="evidence" value="ECO:0000318"/>
    <property type="project" value="GO_Central"/>
</dbReference>
<dbReference type="GO" id="GO:0000977">
    <property type="term" value="F:RNA polymerase II transcription regulatory region sequence-specific DNA binding"/>
    <property type="evidence" value="ECO:0000250"/>
    <property type="project" value="UniProtKB"/>
</dbReference>
<dbReference type="GO" id="GO:0045944">
    <property type="term" value="P:positive regulation of transcription by RNA polymerase II"/>
    <property type="evidence" value="ECO:0000315"/>
    <property type="project" value="WormBase"/>
</dbReference>
<dbReference type="GO" id="GO:0042127">
    <property type="term" value="P:regulation of cell population proliferation"/>
    <property type="evidence" value="ECO:0000318"/>
    <property type="project" value="GO_Central"/>
</dbReference>
<dbReference type="GO" id="GO:0030431">
    <property type="term" value="P:sleep"/>
    <property type="evidence" value="ECO:0000315"/>
    <property type="project" value="WormBase"/>
</dbReference>
<dbReference type="InterPro" id="IPR004979">
    <property type="entry name" value="TF_AP2"/>
</dbReference>
<dbReference type="InterPro" id="IPR013854">
    <property type="entry name" value="TF_AP2_C"/>
</dbReference>
<dbReference type="PANTHER" id="PTHR10812">
    <property type="entry name" value="TRANSCRIPTION FACTOR AP-2"/>
    <property type="match status" value="1"/>
</dbReference>
<dbReference type="PANTHER" id="PTHR10812:SF17">
    <property type="entry name" value="TRANSCRIPTION FACTOR AP-2, ISOFORM D"/>
    <property type="match status" value="1"/>
</dbReference>
<dbReference type="Pfam" id="PF03299">
    <property type="entry name" value="TF_AP-2"/>
    <property type="match status" value="1"/>
</dbReference>
<dbReference type="PRINTS" id="PR01748">
    <property type="entry name" value="AP2TNSCPFCT"/>
</dbReference>
<name>APTF1_CAEEL</name>
<comment type="function">
    <text evidence="5 6">Transcription factor, which is required in the single sleep-active ring interneuron RIS for sleep-like behavioral quiescence induced by neuropeptide signaling in larvae (PubMed:24184105, PubMed:26949257). Regulates gene expression of sleep-inducing FMRFamide-like neuropeptide flp-11 in RIS (PubMed:26949257).</text>
</comment>
<comment type="subunit">
    <text evidence="1">Binds DNA as a dimer.</text>
</comment>
<comment type="subcellular location">
    <subcellularLocation>
        <location evidence="2">Nucleus</location>
    </subcellularLocation>
</comment>
<comment type="tissue specificity">
    <text evidence="5">Expressed in five interneurons AIB, RIB and RIS.</text>
</comment>
<comment type="developmental stage">
    <text evidence="5">Expressed strongly during late embryogenesis and early larval development in three types of interneurons, the paired neurons AIB and RIB and the unpaired neuron RIS in the head, with the strongest expression in RIS. Expression after embryonic development decreases until the adult stage.</text>
</comment>
<comment type="induction">
    <text evidence="5 6">Regulates its own expression during larval development (PubMed:24184105). Transcriptionally regulated by transcription factor lim-6 in RIS interneuron in all developmental stages (PubMed:26949257).</text>
</comment>
<comment type="disruption phenotype">
    <text evidence="5 6">Animals develop with normal speed and go normally through the molt. They stop feeding for a normal time before each molt, but average nose speed is reduced by only about 10% and unlike wild-type, they are never immobile. The command interneurons AVA and AVE, which control backward movement, are not shut down during sleep-like behavior. Optogenetic channelrhodopsin activation of AIBs, RIBs and RIS interneurons during wake-like behavior using blue light does not trigger acute immobility and cessation of pumping in L1 larvae, instead it causes an increase in mobility (PubMed:24184105). No change in GABAergic function of neurons as unc-25 and the vesicular GABA transporter gene unc-47 are expressed normally. The expression of a neuropeptide gene flp-11 is strongly down-regulated in pretzel-stage embryos and in sleeping L4 larvae (PubMed:26949257).</text>
</comment>
<comment type="similarity">
    <text evidence="9">Belongs to the AP-2 family.</text>
</comment>
<accession>Q09585</accession>
<proteinExistence type="evidence at transcript level"/>
<feature type="chain" id="PRO_0000437544" description="Transcription factor aptf-1">
    <location>
        <begin position="1"/>
        <end position="365"/>
    </location>
</feature>
<feature type="region of interest" description="Disordered" evidence="4">
    <location>
        <begin position="13"/>
        <end position="40"/>
    </location>
</feature>
<feature type="region of interest" description="Disordered" evidence="4">
    <location>
        <begin position="93"/>
        <end position="126"/>
    </location>
</feature>
<feature type="region of interest" description="H-S-H (helix-span-helix), dimerization" evidence="3">
    <location>
        <begin position="223"/>
        <end position="356"/>
    </location>
</feature>
<evidence type="ECO:0000250" key="1">
    <source>
        <dbReference type="UniProtKB" id="Q91ZK0"/>
    </source>
</evidence>
<evidence type="ECO:0000250" key="2">
    <source>
        <dbReference type="UniProtKB" id="Q92754"/>
    </source>
</evidence>
<evidence type="ECO:0000255" key="3"/>
<evidence type="ECO:0000256" key="4">
    <source>
        <dbReference type="SAM" id="MobiDB-lite"/>
    </source>
</evidence>
<evidence type="ECO:0000269" key="5">
    <source>
    </source>
</evidence>
<evidence type="ECO:0000269" key="6">
    <source>
    </source>
</evidence>
<evidence type="ECO:0000303" key="7">
    <source>
    </source>
</evidence>
<evidence type="ECO:0000303" key="8">
    <source>
    </source>
</evidence>
<evidence type="ECO:0000305" key="9"/>
<evidence type="ECO:0000312" key="10">
    <source>
        <dbReference type="EMBL" id="CCD72609.1"/>
    </source>
</evidence>
<evidence type="ECO:0000312" key="11">
    <source>
        <dbReference type="Proteomes" id="UP000001940"/>
    </source>
</evidence>
<evidence type="ECO:0000312" key="12">
    <source>
        <dbReference type="WormBase" id="K06A1.1"/>
    </source>
</evidence>
<protein>
    <recommendedName>
        <fullName evidence="8">Transcription factor aptf-1</fullName>
    </recommendedName>
    <alternativeName>
        <fullName evidence="7">AP2 transcription factor aptf-1</fullName>
    </alternativeName>
</protein>
<organism evidence="10">
    <name type="scientific">Caenorhabditis elegans</name>
    <dbReference type="NCBI Taxonomy" id="6239"/>
    <lineage>
        <taxon>Eukaryota</taxon>
        <taxon>Metazoa</taxon>
        <taxon>Ecdysozoa</taxon>
        <taxon>Nematoda</taxon>
        <taxon>Chromadorea</taxon>
        <taxon>Rhabditida</taxon>
        <taxon>Rhabditina</taxon>
        <taxon>Rhabditomorpha</taxon>
        <taxon>Rhabditoidea</taxon>
        <taxon>Rhabditidae</taxon>
        <taxon>Peloderinae</taxon>
        <taxon>Caenorhabditis</taxon>
    </lineage>
</organism>